<gene>
    <name evidence="1" type="primary">ppaX</name>
    <name type="ordered locus">BCE_5265</name>
</gene>
<sequence>MKINTVLFDLDGTLINTNELIISSFLHTLHTYYPNQYKREDVLPFIGPSLHDTFSKIDESKVEELITSYRQFNHDHHDELVEEYETVYETVQELKKQGYKVGIVTTKARQTVEMGLKFSKLDEFFDVVVTIDDVEHVKPHPEPLQKALQLLDAKPEEALMVGDNHHDIVGGQNAGTKTAAVSWTLKGRAYLEAYKPDFMLDKMSDLLPILSDMNRS</sequence>
<feature type="chain" id="PRO_0000056835" description="Pyrophosphatase PpaX">
    <location>
        <begin position="1"/>
        <end position="216"/>
    </location>
</feature>
<feature type="active site" description="Nucleophile" evidence="1">
    <location>
        <position position="9"/>
    </location>
</feature>
<name>PPAX_BACC1</name>
<organism>
    <name type="scientific">Bacillus cereus (strain ATCC 10987 / NRS 248)</name>
    <dbReference type="NCBI Taxonomy" id="222523"/>
    <lineage>
        <taxon>Bacteria</taxon>
        <taxon>Bacillati</taxon>
        <taxon>Bacillota</taxon>
        <taxon>Bacilli</taxon>
        <taxon>Bacillales</taxon>
        <taxon>Bacillaceae</taxon>
        <taxon>Bacillus</taxon>
        <taxon>Bacillus cereus group</taxon>
    </lineage>
</organism>
<evidence type="ECO:0000255" key="1">
    <source>
        <dbReference type="HAMAP-Rule" id="MF_01250"/>
    </source>
</evidence>
<dbReference type="EC" id="3.6.1.1" evidence="1"/>
<dbReference type="EMBL" id="AE017194">
    <property type="protein sequence ID" value="AAS44166.1"/>
    <property type="molecule type" value="Genomic_DNA"/>
</dbReference>
<dbReference type="SMR" id="Q72XV8"/>
<dbReference type="KEGG" id="bca:BCE_5265"/>
<dbReference type="HOGENOM" id="CLU_045011_19_3_9"/>
<dbReference type="Proteomes" id="UP000002527">
    <property type="component" value="Chromosome"/>
</dbReference>
<dbReference type="GO" id="GO:0005829">
    <property type="term" value="C:cytosol"/>
    <property type="evidence" value="ECO:0007669"/>
    <property type="project" value="TreeGrafter"/>
</dbReference>
<dbReference type="GO" id="GO:0004427">
    <property type="term" value="F:inorganic diphosphate phosphatase activity"/>
    <property type="evidence" value="ECO:0007669"/>
    <property type="project" value="UniProtKB-UniRule"/>
</dbReference>
<dbReference type="GO" id="GO:0000287">
    <property type="term" value="F:magnesium ion binding"/>
    <property type="evidence" value="ECO:0007669"/>
    <property type="project" value="UniProtKB-UniRule"/>
</dbReference>
<dbReference type="GO" id="GO:0008967">
    <property type="term" value="F:phosphoglycolate phosphatase activity"/>
    <property type="evidence" value="ECO:0007669"/>
    <property type="project" value="TreeGrafter"/>
</dbReference>
<dbReference type="GO" id="GO:0006281">
    <property type="term" value="P:DNA repair"/>
    <property type="evidence" value="ECO:0007669"/>
    <property type="project" value="TreeGrafter"/>
</dbReference>
<dbReference type="CDD" id="cd02616">
    <property type="entry name" value="HAD_PPase"/>
    <property type="match status" value="1"/>
</dbReference>
<dbReference type="FunFam" id="3.40.50.1000:FF:000022">
    <property type="entry name" value="Phosphoglycolate phosphatase"/>
    <property type="match status" value="1"/>
</dbReference>
<dbReference type="FunFam" id="1.10.150.240:FF:000008">
    <property type="entry name" value="Pyrophosphatase PpaX"/>
    <property type="match status" value="1"/>
</dbReference>
<dbReference type="Gene3D" id="3.40.50.1000">
    <property type="entry name" value="HAD superfamily/HAD-like"/>
    <property type="match status" value="1"/>
</dbReference>
<dbReference type="Gene3D" id="1.10.150.240">
    <property type="entry name" value="Putative phosphatase, domain 2"/>
    <property type="match status" value="1"/>
</dbReference>
<dbReference type="HAMAP" id="MF_01250">
    <property type="entry name" value="Pyrophosphat_PpaX"/>
    <property type="match status" value="1"/>
</dbReference>
<dbReference type="InterPro" id="IPR050155">
    <property type="entry name" value="HAD-like_hydrolase_sf"/>
</dbReference>
<dbReference type="InterPro" id="IPR036412">
    <property type="entry name" value="HAD-like_sf"/>
</dbReference>
<dbReference type="InterPro" id="IPR006439">
    <property type="entry name" value="HAD-SF_hydro_IA"/>
</dbReference>
<dbReference type="InterPro" id="IPR006549">
    <property type="entry name" value="HAD-SF_hydro_IIIA"/>
</dbReference>
<dbReference type="InterPro" id="IPR041492">
    <property type="entry name" value="HAD_2"/>
</dbReference>
<dbReference type="InterPro" id="IPR023214">
    <property type="entry name" value="HAD_sf"/>
</dbReference>
<dbReference type="InterPro" id="IPR023198">
    <property type="entry name" value="PGP-like_dom2"/>
</dbReference>
<dbReference type="InterPro" id="IPR023733">
    <property type="entry name" value="Pyrophosphatase_Ppax"/>
</dbReference>
<dbReference type="NCBIfam" id="TIGR01549">
    <property type="entry name" value="HAD-SF-IA-v1"/>
    <property type="match status" value="1"/>
</dbReference>
<dbReference type="NCBIfam" id="TIGR01509">
    <property type="entry name" value="HAD-SF-IA-v3"/>
    <property type="match status" value="1"/>
</dbReference>
<dbReference type="NCBIfam" id="TIGR01662">
    <property type="entry name" value="HAD-SF-IIIA"/>
    <property type="match status" value="1"/>
</dbReference>
<dbReference type="NCBIfam" id="NF009804">
    <property type="entry name" value="PRK13288.1"/>
    <property type="match status" value="1"/>
</dbReference>
<dbReference type="PANTHER" id="PTHR43434">
    <property type="entry name" value="PHOSPHOGLYCOLATE PHOSPHATASE"/>
    <property type="match status" value="1"/>
</dbReference>
<dbReference type="PANTHER" id="PTHR43434:SF26">
    <property type="entry name" value="PYROPHOSPHATASE PPAX"/>
    <property type="match status" value="1"/>
</dbReference>
<dbReference type="Pfam" id="PF13419">
    <property type="entry name" value="HAD_2"/>
    <property type="match status" value="1"/>
</dbReference>
<dbReference type="PRINTS" id="PR00413">
    <property type="entry name" value="HADHALOGNASE"/>
</dbReference>
<dbReference type="SFLD" id="SFLDG01135">
    <property type="entry name" value="C1.5.6:_HAD__Beta-PGM__Phospha"/>
    <property type="match status" value="1"/>
</dbReference>
<dbReference type="SFLD" id="SFLDG01129">
    <property type="entry name" value="C1.5:_HAD__Beta-PGM__Phosphata"/>
    <property type="match status" value="1"/>
</dbReference>
<dbReference type="SUPFAM" id="SSF56784">
    <property type="entry name" value="HAD-like"/>
    <property type="match status" value="1"/>
</dbReference>
<comment type="function">
    <text evidence="1">Hydrolyzes pyrophosphate formed during P-Ser-HPr dephosphorylation by HPrK/P. Might play a role in controlling the intracellular pyrophosphate pool.</text>
</comment>
<comment type="catalytic activity">
    <reaction evidence="1">
        <text>diphosphate + H2O = 2 phosphate + H(+)</text>
        <dbReference type="Rhea" id="RHEA:24576"/>
        <dbReference type="ChEBI" id="CHEBI:15377"/>
        <dbReference type="ChEBI" id="CHEBI:15378"/>
        <dbReference type="ChEBI" id="CHEBI:33019"/>
        <dbReference type="ChEBI" id="CHEBI:43474"/>
        <dbReference type="EC" id="3.6.1.1"/>
    </reaction>
</comment>
<comment type="cofactor">
    <cofactor evidence="1">
        <name>Mg(2+)</name>
        <dbReference type="ChEBI" id="CHEBI:18420"/>
    </cofactor>
</comment>
<comment type="similarity">
    <text evidence="1">Belongs to the HAD-like hydrolase superfamily. PpaX family.</text>
</comment>
<reference key="1">
    <citation type="journal article" date="2004" name="Nucleic Acids Res.">
        <title>The genome sequence of Bacillus cereus ATCC 10987 reveals metabolic adaptations and a large plasmid related to Bacillus anthracis pXO1.</title>
        <authorList>
            <person name="Rasko D.A."/>
            <person name="Ravel J."/>
            <person name="Oekstad O.A."/>
            <person name="Helgason E."/>
            <person name="Cer R.Z."/>
            <person name="Jiang L."/>
            <person name="Shores K.A."/>
            <person name="Fouts D.E."/>
            <person name="Tourasse N.J."/>
            <person name="Angiuoli S.V."/>
            <person name="Kolonay J.F."/>
            <person name="Nelson W.C."/>
            <person name="Kolstoe A.-B."/>
            <person name="Fraser C.M."/>
            <person name="Read T.D."/>
        </authorList>
    </citation>
    <scope>NUCLEOTIDE SEQUENCE [LARGE SCALE GENOMIC DNA]</scope>
    <source>
        <strain>ATCC 10987 / NRS 248</strain>
    </source>
</reference>
<protein>
    <recommendedName>
        <fullName evidence="1">Pyrophosphatase PpaX</fullName>
        <ecNumber evidence="1">3.6.1.1</ecNumber>
    </recommendedName>
</protein>
<accession>Q72XV8</accession>
<keyword id="KW-0378">Hydrolase</keyword>
<keyword id="KW-0460">Magnesium</keyword>
<proteinExistence type="inferred from homology"/>